<evidence type="ECO:0000305" key="1"/>
<dbReference type="EMBL" id="AP008934">
    <property type="protein sequence ID" value="BAE18291.1"/>
    <property type="molecule type" value="Genomic_DNA"/>
</dbReference>
<dbReference type="RefSeq" id="WP_002483123.1">
    <property type="nucleotide sequence ID" value="NC_007350.1"/>
</dbReference>
<dbReference type="SMR" id="Q49Y53"/>
<dbReference type="GeneID" id="82528553"/>
<dbReference type="KEGG" id="ssp:SSP1146"/>
<dbReference type="eggNOG" id="COG3906">
    <property type="taxonomic scope" value="Bacteria"/>
</dbReference>
<dbReference type="HOGENOM" id="CLU_146610_2_1_9"/>
<dbReference type="OrthoDB" id="2086132at2"/>
<dbReference type="Proteomes" id="UP000006371">
    <property type="component" value="Chromosome"/>
</dbReference>
<dbReference type="HAMAP" id="MF_01448">
    <property type="entry name" value="UPF0473"/>
    <property type="match status" value="1"/>
</dbReference>
<dbReference type="InterPro" id="IPR009711">
    <property type="entry name" value="UPF0473"/>
</dbReference>
<dbReference type="NCBIfam" id="NF010214">
    <property type="entry name" value="PRK13678.1-1"/>
    <property type="match status" value="1"/>
</dbReference>
<dbReference type="PANTHER" id="PTHR40066">
    <property type="entry name" value="UPF0473 PROTEIN CBO2561/CLC_2432"/>
    <property type="match status" value="1"/>
</dbReference>
<dbReference type="PANTHER" id="PTHR40066:SF1">
    <property type="entry name" value="UPF0473 PROTEIN CBO2561_CLC_2432"/>
    <property type="match status" value="1"/>
</dbReference>
<dbReference type="Pfam" id="PF06949">
    <property type="entry name" value="DUF1292"/>
    <property type="match status" value="1"/>
</dbReference>
<keyword id="KW-1185">Reference proteome</keyword>
<name>Y1146_STAS1</name>
<gene>
    <name type="ordered locus">SSP1146</name>
</gene>
<reference key="1">
    <citation type="journal article" date="2005" name="Proc. Natl. Acad. Sci. U.S.A.">
        <title>Whole genome sequence of Staphylococcus saprophyticus reveals the pathogenesis of uncomplicated urinary tract infection.</title>
        <authorList>
            <person name="Kuroda M."/>
            <person name="Yamashita A."/>
            <person name="Hirakawa H."/>
            <person name="Kumano M."/>
            <person name="Morikawa K."/>
            <person name="Higashide M."/>
            <person name="Maruyama A."/>
            <person name="Inose Y."/>
            <person name="Matoba K."/>
            <person name="Toh H."/>
            <person name="Kuhara S."/>
            <person name="Hattori M."/>
            <person name="Ohta T."/>
        </authorList>
    </citation>
    <scope>NUCLEOTIDE SEQUENCE [LARGE SCALE GENOMIC DNA]</scope>
    <source>
        <strain>ATCC 15305 / DSM 20229 / NCIMB 8711 / NCTC 7292 / S-41</strain>
    </source>
</reference>
<feature type="chain" id="PRO_0000299299" description="UPF0473 protein SSP1146">
    <location>
        <begin position="1"/>
        <end position="110"/>
    </location>
</feature>
<protein>
    <recommendedName>
        <fullName>UPF0473 protein SSP1146</fullName>
    </recommendedName>
</protein>
<proteinExistence type="inferred from homology"/>
<comment type="similarity">
    <text evidence="1">Belongs to the UPF0473 family.</text>
</comment>
<sequence length="110" mass="12988">MTEHNHDSQLEINNEEELLTLYDEEGNEVLYRKVLEFFHPEFKKEYVILAEEGAESDDDDLIELVPMINEPDENGEGGKFLPVETDEEWDMIEEVVNTEMDDHDHDHDHE</sequence>
<organism>
    <name type="scientific">Staphylococcus saprophyticus subsp. saprophyticus (strain ATCC 15305 / DSM 20229 / NCIMB 8711 / NCTC 7292 / S-41)</name>
    <dbReference type="NCBI Taxonomy" id="342451"/>
    <lineage>
        <taxon>Bacteria</taxon>
        <taxon>Bacillati</taxon>
        <taxon>Bacillota</taxon>
        <taxon>Bacilli</taxon>
        <taxon>Bacillales</taxon>
        <taxon>Staphylococcaceae</taxon>
        <taxon>Staphylococcus</taxon>
    </lineage>
</organism>
<accession>Q49Y53</accession>